<keyword id="KW-0028">Amino-acid biosynthesis</keyword>
<keyword id="KW-0963">Cytoplasm</keyword>
<keyword id="KW-0368">Histidine biosynthesis</keyword>
<keyword id="KW-0413">Isomerase</keyword>
<proteinExistence type="inferred from homology"/>
<gene>
    <name evidence="1" type="primary">hisA</name>
    <name type="ordered locus">SE_0275</name>
</gene>
<reference key="1">
    <citation type="journal article" date="2003" name="Mol. Microbiol.">
        <title>Genome-based analysis of virulence genes in a non-biofilm-forming Staphylococcus epidermidis strain (ATCC 12228).</title>
        <authorList>
            <person name="Zhang Y.-Q."/>
            <person name="Ren S.-X."/>
            <person name="Li H.-L."/>
            <person name="Wang Y.-X."/>
            <person name="Fu G."/>
            <person name="Yang J."/>
            <person name="Qin Z.-Q."/>
            <person name="Miao Y.-G."/>
            <person name="Wang W.-Y."/>
            <person name="Chen R.-S."/>
            <person name="Shen Y."/>
            <person name="Chen Z."/>
            <person name="Yuan Z.-H."/>
            <person name="Zhao G.-P."/>
            <person name="Qu D."/>
            <person name="Danchin A."/>
            <person name="Wen Y.-M."/>
        </authorList>
    </citation>
    <scope>NUCLEOTIDE SEQUENCE [LARGE SCALE GENOMIC DNA]</scope>
    <source>
        <strain>ATCC 12228 / FDA PCI 1200</strain>
    </source>
</reference>
<sequence>MIDLWPAIDLINSTSVRLTEGKYDTKEKMEKSVEDSIRFYSQFKCVKRIHIVDLIGAKAKEVKEFDYIRSLRKVTTKPIEVGGGIRSKQTIENYIHSGIDYCIVGTKGIQDIEWLTHMTHQFPNKLYLSVDAFGEKIKINGWKEDAKLNLFDYVAKIEHLPLGGVIYTDISKDGKLSGPNFDLTGRLALYTSLPVIASGGIRHQEDLFRLESLNVHAAIVGKAAHLDEFWEGLS</sequence>
<name>HIS4_STAES</name>
<comment type="catalytic activity">
    <reaction evidence="1">
        <text>1-(5-phospho-beta-D-ribosyl)-5-[(5-phospho-beta-D-ribosylamino)methylideneamino]imidazole-4-carboxamide = 5-[(5-phospho-1-deoxy-D-ribulos-1-ylimino)methylamino]-1-(5-phospho-beta-D-ribosyl)imidazole-4-carboxamide</text>
        <dbReference type="Rhea" id="RHEA:15469"/>
        <dbReference type="ChEBI" id="CHEBI:58435"/>
        <dbReference type="ChEBI" id="CHEBI:58525"/>
        <dbReference type="EC" id="5.3.1.16"/>
    </reaction>
</comment>
<comment type="pathway">
    <text evidence="1">Amino-acid biosynthesis; L-histidine biosynthesis; L-histidine from 5-phospho-alpha-D-ribose 1-diphosphate: step 4/9.</text>
</comment>
<comment type="subcellular location">
    <subcellularLocation>
        <location evidence="1">Cytoplasm</location>
    </subcellularLocation>
</comment>
<comment type="similarity">
    <text evidence="1">Belongs to the HisA/HisF family.</text>
</comment>
<feature type="chain" id="PRO_0000142058" description="1-(5-phosphoribosyl)-5-[(5-phosphoribosylamino)methylideneamino] imidazole-4-carboxamide isomerase">
    <location>
        <begin position="1"/>
        <end position="234"/>
    </location>
</feature>
<feature type="active site" description="Proton acceptor" evidence="1">
    <location>
        <position position="9"/>
    </location>
</feature>
<feature type="active site" description="Proton donor" evidence="1">
    <location>
        <position position="131"/>
    </location>
</feature>
<protein>
    <recommendedName>
        <fullName evidence="1">1-(5-phosphoribosyl)-5-[(5-phosphoribosylamino)methylideneamino] imidazole-4-carboxamide isomerase</fullName>
        <ecNumber evidence="1">5.3.1.16</ecNumber>
    </recommendedName>
    <alternativeName>
        <fullName evidence="1">Phosphoribosylformimino-5-aminoimidazole carboxamide ribotide isomerase</fullName>
    </alternativeName>
</protein>
<dbReference type="EC" id="5.3.1.16" evidence="1"/>
<dbReference type="EMBL" id="AE015929">
    <property type="protein sequence ID" value="AAO03872.1"/>
    <property type="molecule type" value="Genomic_DNA"/>
</dbReference>
<dbReference type="RefSeq" id="NP_763830.1">
    <property type="nucleotide sequence ID" value="NC_004461.1"/>
</dbReference>
<dbReference type="RefSeq" id="WP_001829444.1">
    <property type="nucleotide sequence ID" value="NZ_WBME01000037.1"/>
</dbReference>
<dbReference type="SMR" id="Q8CQ93"/>
<dbReference type="GeneID" id="50017669"/>
<dbReference type="KEGG" id="sep:SE_0275"/>
<dbReference type="PATRIC" id="fig|176280.10.peg.253"/>
<dbReference type="eggNOG" id="COG0106">
    <property type="taxonomic scope" value="Bacteria"/>
</dbReference>
<dbReference type="HOGENOM" id="CLU_048577_1_2_9"/>
<dbReference type="OrthoDB" id="9807749at2"/>
<dbReference type="UniPathway" id="UPA00031">
    <property type="reaction ID" value="UER00009"/>
</dbReference>
<dbReference type="Proteomes" id="UP000001411">
    <property type="component" value="Chromosome"/>
</dbReference>
<dbReference type="GO" id="GO:0005737">
    <property type="term" value="C:cytoplasm"/>
    <property type="evidence" value="ECO:0007669"/>
    <property type="project" value="UniProtKB-SubCell"/>
</dbReference>
<dbReference type="GO" id="GO:0003949">
    <property type="term" value="F:1-(5-phosphoribosyl)-5-[(5-phosphoribosylamino)methylideneamino]imidazole-4-carboxamide isomerase activity"/>
    <property type="evidence" value="ECO:0007669"/>
    <property type="project" value="UniProtKB-UniRule"/>
</dbReference>
<dbReference type="GO" id="GO:0000105">
    <property type="term" value="P:L-histidine biosynthetic process"/>
    <property type="evidence" value="ECO:0007669"/>
    <property type="project" value="UniProtKB-UniRule"/>
</dbReference>
<dbReference type="GO" id="GO:0000162">
    <property type="term" value="P:L-tryptophan biosynthetic process"/>
    <property type="evidence" value="ECO:0007669"/>
    <property type="project" value="TreeGrafter"/>
</dbReference>
<dbReference type="CDD" id="cd04732">
    <property type="entry name" value="HisA"/>
    <property type="match status" value="1"/>
</dbReference>
<dbReference type="Gene3D" id="3.20.20.70">
    <property type="entry name" value="Aldolase class I"/>
    <property type="match status" value="1"/>
</dbReference>
<dbReference type="HAMAP" id="MF_01014">
    <property type="entry name" value="HisA"/>
    <property type="match status" value="1"/>
</dbReference>
<dbReference type="InterPro" id="IPR013785">
    <property type="entry name" value="Aldolase_TIM"/>
</dbReference>
<dbReference type="InterPro" id="IPR006062">
    <property type="entry name" value="His_biosynth"/>
</dbReference>
<dbReference type="InterPro" id="IPR006063">
    <property type="entry name" value="HisA_bact_arch"/>
</dbReference>
<dbReference type="InterPro" id="IPR044524">
    <property type="entry name" value="Isoase_HisA-like"/>
</dbReference>
<dbReference type="InterPro" id="IPR023016">
    <property type="entry name" value="Isoase_HisA-like_bact"/>
</dbReference>
<dbReference type="InterPro" id="IPR011060">
    <property type="entry name" value="RibuloseP-bd_barrel"/>
</dbReference>
<dbReference type="NCBIfam" id="TIGR00007">
    <property type="entry name" value="1-(5-phosphoribosyl)-5-[(5-phosphoribosylamino)methylideneamino]imidazole-4-carboxamide isomerase"/>
    <property type="match status" value="1"/>
</dbReference>
<dbReference type="NCBIfam" id="NF010114">
    <property type="entry name" value="PRK13587.1"/>
    <property type="match status" value="1"/>
</dbReference>
<dbReference type="PANTHER" id="PTHR43090">
    <property type="entry name" value="1-(5-PHOSPHORIBOSYL)-5-[(5-PHOSPHORIBOSYLAMINO)METHYLIDENEAMINO] IMIDAZOLE-4-CARBOXAMIDE ISOMERASE"/>
    <property type="match status" value="1"/>
</dbReference>
<dbReference type="PANTHER" id="PTHR43090:SF2">
    <property type="entry name" value="1-(5-PHOSPHORIBOSYL)-5-[(5-PHOSPHORIBOSYLAMINO)METHYLIDENEAMINO] IMIDAZOLE-4-CARBOXAMIDE ISOMERASE"/>
    <property type="match status" value="1"/>
</dbReference>
<dbReference type="Pfam" id="PF00977">
    <property type="entry name" value="His_biosynth"/>
    <property type="match status" value="1"/>
</dbReference>
<dbReference type="SUPFAM" id="SSF51366">
    <property type="entry name" value="Ribulose-phoshate binding barrel"/>
    <property type="match status" value="1"/>
</dbReference>
<accession>Q8CQ93</accession>
<evidence type="ECO:0000255" key="1">
    <source>
        <dbReference type="HAMAP-Rule" id="MF_01014"/>
    </source>
</evidence>
<organism>
    <name type="scientific">Staphylococcus epidermidis (strain ATCC 12228 / FDA PCI 1200)</name>
    <dbReference type="NCBI Taxonomy" id="176280"/>
    <lineage>
        <taxon>Bacteria</taxon>
        <taxon>Bacillati</taxon>
        <taxon>Bacillota</taxon>
        <taxon>Bacilli</taxon>
        <taxon>Bacillales</taxon>
        <taxon>Staphylococcaceae</taxon>
        <taxon>Staphylococcus</taxon>
    </lineage>
</organism>